<protein>
    <recommendedName>
        <fullName evidence="1">Photosystem I reaction center subunit IX</fullName>
    </recommendedName>
</protein>
<proteinExistence type="inferred from homology"/>
<dbReference type="EMBL" id="CP000806">
    <property type="protein sequence ID" value="ACB50639.1"/>
    <property type="molecule type" value="Genomic_DNA"/>
</dbReference>
<dbReference type="RefSeq" id="WP_008275518.1">
    <property type="nucleotide sequence ID" value="NC_010546.1"/>
</dbReference>
<dbReference type="SMR" id="B1WVQ2"/>
<dbReference type="STRING" id="43989.cce_1289"/>
<dbReference type="KEGG" id="cyt:cce_1289"/>
<dbReference type="eggNOG" id="ENOG5033A5A">
    <property type="taxonomic scope" value="Bacteria"/>
</dbReference>
<dbReference type="HOGENOM" id="CLU_212133_1_1_3"/>
<dbReference type="OrthoDB" id="532702at2"/>
<dbReference type="Proteomes" id="UP000001203">
    <property type="component" value="Chromosome circular"/>
</dbReference>
<dbReference type="GO" id="GO:0009522">
    <property type="term" value="C:photosystem I"/>
    <property type="evidence" value="ECO:0007669"/>
    <property type="project" value="UniProtKB-KW"/>
</dbReference>
<dbReference type="GO" id="GO:0031676">
    <property type="term" value="C:plasma membrane-derived thylakoid membrane"/>
    <property type="evidence" value="ECO:0007669"/>
    <property type="project" value="UniProtKB-SubCell"/>
</dbReference>
<dbReference type="GO" id="GO:0015979">
    <property type="term" value="P:photosynthesis"/>
    <property type="evidence" value="ECO:0007669"/>
    <property type="project" value="UniProtKB-UniRule"/>
</dbReference>
<dbReference type="Gene3D" id="1.20.5.510">
    <property type="entry name" value="Single helix bin"/>
    <property type="match status" value="1"/>
</dbReference>
<dbReference type="HAMAP" id="MF_00522">
    <property type="entry name" value="PSI_PsaJ"/>
    <property type="match status" value="1"/>
</dbReference>
<dbReference type="InterPro" id="IPR002615">
    <property type="entry name" value="PSI_PsaJ"/>
</dbReference>
<dbReference type="InterPro" id="IPR036062">
    <property type="entry name" value="PSI_PsaJ_sf"/>
</dbReference>
<dbReference type="NCBIfam" id="NF002743">
    <property type="entry name" value="PRK02733.1"/>
    <property type="match status" value="1"/>
</dbReference>
<dbReference type="PANTHER" id="PTHR36082">
    <property type="match status" value="1"/>
</dbReference>
<dbReference type="PANTHER" id="PTHR36082:SF2">
    <property type="entry name" value="PHOTOSYSTEM I REACTION CENTER SUBUNIT IX"/>
    <property type="match status" value="1"/>
</dbReference>
<dbReference type="Pfam" id="PF01701">
    <property type="entry name" value="PSI_PsaJ"/>
    <property type="match status" value="1"/>
</dbReference>
<dbReference type="SUPFAM" id="SSF81544">
    <property type="entry name" value="Subunit IX of photosystem I reaction centre, PsaJ"/>
    <property type="match status" value="1"/>
</dbReference>
<organism>
    <name type="scientific">Crocosphaera subtropica (strain ATCC 51142 / BH68)</name>
    <name type="common">Cyanothece sp. (strain ATCC 51142)</name>
    <dbReference type="NCBI Taxonomy" id="43989"/>
    <lineage>
        <taxon>Bacteria</taxon>
        <taxon>Bacillati</taxon>
        <taxon>Cyanobacteriota</taxon>
        <taxon>Cyanophyceae</taxon>
        <taxon>Oscillatoriophycideae</taxon>
        <taxon>Chroococcales</taxon>
        <taxon>Aphanothecaceae</taxon>
        <taxon>Crocosphaera</taxon>
        <taxon>Crocosphaera subtropica</taxon>
    </lineage>
</organism>
<accession>B1WVQ2</accession>
<feature type="chain" id="PRO_1000192865" description="Photosystem I reaction center subunit IX">
    <location>
        <begin position="1"/>
        <end position="42"/>
    </location>
</feature>
<feature type="transmembrane region" description="Helical" evidence="1">
    <location>
        <begin position="7"/>
        <end position="27"/>
    </location>
</feature>
<reference key="1">
    <citation type="journal article" date="2008" name="Proc. Natl. Acad. Sci. U.S.A.">
        <title>The genome of Cyanothece 51142, a unicellular diazotrophic cyanobacterium important in the marine nitrogen cycle.</title>
        <authorList>
            <person name="Welsh E.A."/>
            <person name="Liberton M."/>
            <person name="Stoeckel J."/>
            <person name="Loh T."/>
            <person name="Elvitigala T."/>
            <person name="Wang C."/>
            <person name="Wollam A."/>
            <person name="Fulton R.S."/>
            <person name="Clifton S.W."/>
            <person name="Jacobs J.M."/>
            <person name="Aurora R."/>
            <person name="Ghosh B.K."/>
            <person name="Sherman L.A."/>
            <person name="Smith R.D."/>
            <person name="Wilson R.K."/>
            <person name="Pakrasi H.B."/>
        </authorList>
    </citation>
    <scope>NUCLEOTIDE SEQUENCE [LARGE SCALE GENOMIC DNA]</scope>
    <source>
        <strain>ATCC 51142 / BH68</strain>
    </source>
</reference>
<name>PSAJ_CROS5</name>
<comment type="function">
    <text evidence="1">May help in the organization of the PsaE and PsaF subunits.</text>
</comment>
<comment type="subcellular location">
    <subcellularLocation>
        <location evidence="1">Cellular thylakoid membrane</location>
        <topology evidence="1">Single-pass membrane protein</topology>
    </subcellularLocation>
</comment>
<comment type="similarity">
    <text evidence="1">Belongs to the PsaJ family.</text>
</comment>
<keyword id="KW-0472">Membrane</keyword>
<keyword id="KW-0602">Photosynthesis</keyword>
<keyword id="KW-0603">Photosystem I</keyword>
<keyword id="KW-1185">Reference proteome</keyword>
<keyword id="KW-0793">Thylakoid</keyword>
<keyword id="KW-0812">Transmembrane</keyword>
<keyword id="KW-1133">Transmembrane helix</keyword>
<evidence type="ECO:0000255" key="1">
    <source>
        <dbReference type="HAMAP-Rule" id="MF_00522"/>
    </source>
</evidence>
<gene>
    <name evidence="1" type="primary">psaJ</name>
    <name type="ordered locus">cce_1289</name>
</gene>
<sequence length="42" mass="4665">MEGLTKFLSTAPVLIMALLTVTAGILIEFNRFYPDLLFHPLG</sequence>